<feature type="chain" id="PRO_0000194775" description="Nuclear transport factor 2">
    <location>
        <begin position="1"/>
        <end position="127"/>
    </location>
</feature>
<feature type="domain" description="NTF2" evidence="2">
    <location>
        <begin position="10"/>
        <end position="121"/>
    </location>
</feature>
<feature type="modified residue" description="N6-acetyllysine" evidence="9">
    <location>
        <position position="4"/>
    </location>
</feature>
<feature type="mutagenesis site" description="No effect on localization to the nucleoplasm." evidence="3">
    <original>E</original>
    <variation>K</variation>
    <location>
        <position position="42"/>
    </location>
</feature>
<feature type="mutagenesis site" description="No effect on localization to the nucleoplasm." evidence="3">
    <location>
        <position position="124"/>
    </location>
</feature>
<feature type="helix" evidence="10">
    <location>
        <begin position="6"/>
        <end position="24"/>
    </location>
</feature>
<feature type="helix" evidence="10">
    <location>
        <begin position="26"/>
        <end position="32"/>
    </location>
</feature>
<feature type="strand" evidence="10">
    <location>
        <begin position="33"/>
        <end position="41"/>
    </location>
</feature>
<feature type="strand" evidence="10">
    <location>
        <begin position="44"/>
        <end position="48"/>
    </location>
</feature>
<feature type="helix" evidence="10">
    <location>
        <begin position="49"/>
        <end position="57"/>
    </location>
</feature>
<feature type="strand" evidence="10">
    <location>
        <begin position="62"/>
        <end position="75"/>
    </location>
</feature>
<feature type="strand" evidence="10">
    <location>
        <begin position="81"/>
        <end position="94"/>
    </location>
</feature>
<feature type="strand" evidence="10">
    <location>
        <begin position="97"/>
        <end position="108"/>
    </location>
</feature>
<feature type="strand" evidence="10">
    <location>
        <begin position="111"/>
        <end position="124"/>
    </location>
</feature>
<protein>
    <recommendedName>
        <fullName evidence="7">Nuclear transport factor 2</fullName>
        <shortName>NTF-2</shortName>
    </recommendedName>
    <alternativeName>
        <fullName evidence="6">Placental protein 15</fullName>
        <shortName evidence="6">PP15</shortName>
    </alternativeName>
</protein>
<name>NTF2_HUMAN</name>
<keyword id="KW-0002">3D-structure</keyword>
<keyword id="KW-0007">Acetylation</keyword>
<keyword id="KW-0963">Cytoplasm</keyword>
<keyword id="KW-0903">Direct protein sequencing</keyword>
<keyword id="KW-0472">Membrane</keyword>
<keyword id="KW-0509">mRNA transport</keyword>
<keyword id="KW-0906">Nuclear pore complex</keyword>
<keyword id="KW-0539">Nucleus</keyword>
<keyword id="KW-0653">Protein transport</keyword>
<keyword id="KW-1267">Proteomics identification</keyword>
<keyword id="KW-1185">Reference proteome</keyword>
<keyword id="KW-0811">Translocation</keyword>
<keyword id="KW-0813">Transport</keyword>
<dbReference type="EMBL" id="X07315">
    <property type="protein sequence ID" value="CAA30278.1"/>
    <property type="molecule type" value="mRNA"/>
</dbReference>
<dbReference type="EMBL" id="U43939">
    <property type="protein sequence ID" value="AAA85905.1"/>
    <property type="molecule type" value="mRNA"/>
</dbReference>
<dbReference type="EMBL" id="CR456937">
    <property type="protein sequence ID" value="CAG33218.1"/>
    <property type="molecule type" value="mRNA"/>
</dbReference>
<dbReference type="EMBL" id="AK311822">
    <property type="protein sequence ID" value="BAG34764.1"/>
    <property type="molecule type" value="mRNA"/>
</dbReference>
<dbReference type="EMBL" id="CH471092">
    <property type="protein sequence ID" value="EAW83181.1"/>
    <property type="molecule type" value="Genomic_DNA"/>
</dbReference>
<dbReference type="EMBL" id="BC002348">
    <property type="protein sequence ID" value="AAH02348.1"/>
    <property type="molecule type" value="mRNA"/>
</dbReference>
<dbReference type="CCDS" id="CCDS10848.1"/>
<dbReference type="PIR" id="S00751">
    <property type="entry name" value="S00751"/>
</dbReference>
<dbReference type="RefSeq" id="NP_001308967.1">
    <property type="nucleotide sequence ID" value="NM_001322038.2"/>
</dbReference>
<dbReference type="RefSeq" id="NP_001308968.1">
    <property type="nucleotide sequence ID" value="NM_001322039.2"/>
</dbReference>
<dbReference type="RefSeq" id="NP_001308969.1">
    <property type="nucleotide sequence ID" value="NM_001322040.2"/>
</dbReference>
<dbReference type="RefSeq" id="NP_001308970.1">
    <property type="nucleotide sequence ID" value="NM_001322041.2"/>
</dbReference>
<dbReference type="RefSeq" id="NP_005787.1">
    <property type="nucleotide sequence ID" value="NM_005796.3"/>
</dbReference>
<dbReference type="PDB" id="1GY5">
    <property type="method" value="X-ray"/>
    <property type="resolution" value="2.30 A"/>
    <property type="chains" value="A/B=1-127"/>
</dbReference>
<dbReference type="PDBsum" id="1GY5"/>
<dbReference type="BMRB" id="P61970"/>
<dbReference type="SMR" id="P61970"/>
<dbReference type="BioGRID" id="115499">
    <property type="interactions" value="122"/>
</dbReference>
<dbReference type="DIP" id="DIP-6057N"/>
<dbReference type="FunCoup" id="P61970">
    <property type="interactions" value="3470"/>
</dbReference>
<dbReference type="IntAct" id="P61970">
    <property type="interactions" value="62"/>
</dbReference>
<dbReference type="STRING" id="9606.ENSP00000219169"/>
<dbReference type="GlyGen" id="P61970">
    <property type="glycosylation" value="1 site, 1 O-linked glycan (1 site)"/>
</dbReference>
<dbReference type="iPTMnet" id="P61970"/>
<dbReference type="MetOSite" id="P61970"/>
<dbReference type="PhosphoSitePlus" id="P61970"/>
<dbReference type="SwissPalm" id="P61970"/>
<dbReference type="BioMuta" id="NUTF2"/>
<dbReference type="DMDM" id="48429030"/>
<dbReference type="OGP" id="P61970"/>
<dbReference type="jPOST" id="P61970"/>
<dbReference type="MassIVE" id="P61970"/>
<dbReference type="PaxDb" id="9606-ENSP00000219169"/>
<dbReference type="PeptideAtlas" id="P61970"/>
<dbReference type="ProteomicsDB" id="57351"/>
<dbReference type="Pumba" id="P61970"/>
<dbReference type="TopDownProteomics" id="P61970"/>
<dbReference type="Antibodypedia" id="15885">
    <property type="antibodies" value="223 antibodies from 30 providers"/>
</dbReference>
<dbReference type="DNASU" id="10204"/>
<dbReference type="Ensembl" id="ENST00000219169.9">
    <property type="protein sequence ID" value="ENSP00000219169.4"/>
    <property type="gene ID" value="ENSG00000102898.13"/>
</dbReference>
<dbReference type="Ensembl" id="ENST00000568396.2">
    <property type="protein sequence ID" value="ENSP00000457022.1"/>
    <property type="gene ID" value="ENSG00000102898.13"/>
</dbReference>
<dbReference type="Ensembl" id="ENST00000569436.7">
    <property type="protein sequence ID" value="ENSP00000457989.1"/>
    <property type="gene ID" value="ENSG00000102898.13"/>
</dbReference>
<dbReference type="Ensembl" id="ENST00000700613.1">
    <property type="protein sequence ID" value="ENSP00000515103.1"/>
    <property type="gene ID" value="ENSG00000102898.13"/>
</dbReference>
<dbReference type="Ensembl" id="ENST00000700614.1">
    <property type="protein sequence ID" value="ENSP00000515104.1"/>
    <property type="gene ID" value="ENSG00000102898.13"/>
</dbReference>
<dbReference type="GeneID" id="10204"/>
<dbReference type="KEGG" id="hsa:10204"/>
<dbReference type="MANE-Select" id="ENST00000219169.9">
    <property type="protein sequence ID" value="ENSP00000219169.4"/>
    <property type="RefSeq nucleotide sequence ID" value="NM_005796.3"/>
    <property type="RefSeq protein sequence ID" value="NP_005787.1"/>
</dbReference>
<dbReference type="UCSC" id="uc002eup.4">
    <property type="organism name" value="human"/>
</dbReference>
<dbReference type="AGR" id="HGNC:13722"/>
<dbReference type="CTD" id="10204"/>
<dbReference type="DisGeNET" id="10204"/>
<dbReference type="GeneCards" id="NUTF2"/>
<dbReference type="HGNC" id="HGNC:13722">
    <property type="gene designation" value="NUTF2"/>
</dbReference>
<dbReference type="HPA" id="ENSG00000102898">
    <property type="expression patterns" value="Low tissue specificity"/>
</dbReference>
<dbReference type="MalaCards" id="NUTF2"/>
<dbReference type="MIM" id="605813">
    <property type="type" value="gene"/>
</dbReference>
<dbReference type="neXtProt" id="NX_P61970"/>
<dbReference type="OpenTargets" id="ENSG00000102898"/>
<dbReference type="PharmGKB" id="PA38365"/>
<dbReference type="VEuPathDB" id="HostDB:ENSG00000102898"/>
<dbReference type="eggNOG" id="KOG2104">
    <property type="taxonomic scope" value="Eukaryota"/>
</dbReference>
<dbReference type="GeneTree" id="ENSGT00510000047030"/>
<dbReference type="HOGENOM" id="CLU_131642_1_1_1"/>
<dbReference type="InParanoid" id="P61970"/>
<dbReference type="OMA" id="QFVEYYY"/>
<dbReference type="OrthoDB" id="6507044at2759"/>
<dbReference type="PAN-GO" id="P61970">
    <property type="GO annotations" value="2 GO annotations based on evolutionary models"/>
</dbReference>
<dbReference type="PhylomeDB" id="P61970"/>
<dbReference type="TreeFam" id="TF314422"/>
<dbReference type="PathwayCommons" id="P61970"/>
<dbReference type="SignaLink" id="P61970"/>
<dbReference type="SIGNOR" id="P61970"/>
<dbReference type="BioGRID-ORCS" id="10204">
    <property type="hits" value="816 hits in 1157 CRISPR screens"/>
</dbReference>
<dbReference type="ChiTaRS" id="NUTF2">
    <property type="organism name" value="human"/>
</dbReference>
<dbReference type="EvolutionaryTrace" id="P61970"/>
<dbReference type="GeneWiki" id="NUTF2"/>
<dbReference type="GenomeRNAi" id="10204"/>
<dbReference type="Pharos" id="P61970">
    <property type="development level" value="Tbio"/>
</dbReference>
<dbReference type="PRO" id="PR:P61970"/>
<dbReference type="Proteomes" id="UP000005640">
    <property type="component" value="Chromosome 16"/>
</dbReference>
<dbReference type="RNAct" id="P61970">
    <property type="molecule type" value="protein"/>
</dbReference>
<dbReference type="Bgee" id="ENSG00000102898">
    <property type="expression patterns" value="Expressed in hindlimb stylopod muscle and 162 other cell types or tissues"/>
</dbReference>
<dbReference type="ExpressionAtlas" id="P61970">
    <property type="expression patterns" value="baseline and differential"/>
</dbReference>
<dbReference type="GO" id="GO:0005829">
    <property type="term" value="C:cytosol"/>
    <property type="evidence" value="ECO:0000314"/>
    <property type="project" value="UniProtKB"/>
</dbReference>
<dbReference type="GO" id="GO:0070062">
    <property type="term" value="C:extracellular exosome"/>
    <property type="evidence" value="ECO:0007005"/>
    <property type="project" value="UniProtKB"/>
</dbReference>
<dbReference type="GO" id="GO:0005637">
    <property type="term" value="C:nuclear inner membrane"/>
    <property type="evidence" value="ECO:0007669"/>
    <property type="project" value="UniProtKB-SubCell"/>
</dbReference>
<dbReference type="GO" id="GO:0031965">
    <property type="term" value="C:nuclear membrane"/>
    <property type="evidence" value="ECO:0000250"/>
    <property type="project" value="UniProtKB"/>
</dbReference>
<dbReference type="GO" id="GO:0005640">
    <property type="term" value="C:nuclear outer membrane"/>
    <property type="evidence" value="ECO:0007669"/>
    <property type="project" value="UniProtKB-SubCell"/>
</dbReference>
<dbReference type="GO" id="GO:0044613">
    <property type="term" value="C:nuclear pore central transport channel"/>
    <property type="evidence" value="ECO:0000318"/>
    <property type="project" value="GO_Central"/>
</dbReference>
<dbReference type="GO" id="GO:0005654">
    <property type="term" value="C:nucleoplasm"/>
    <property type="evidence" value="ECO:0000314"/>
    <property type="project" value="UniProtKB"/>
</dbReference>
<dbReference type="GO" id="GO:0042802">
    <property type="term" value="F:identical protein binding"/>
    <property type="evidence" value="ECO:0000353"/>
    <property type="project" value="IntAct"/>
</dbReference>
<dbReference type="GO" id="GO:0061608">
    <property type="term" value="F:nuclear import signal receptor activity"/>
    <property type="evidence" value="ECO:0000318"/>
    <property type="project" value="GO_Central"/>
</dbReference>
<dbReference type="GO" id="GO:0031267">
    <property type="term" value="F:small GTPase binding"/>
    <property type="evidence" value="ECO:0000314"/>
    <property type="project" value="UniProtKB"/>
</dbReference>
<dbReference type="GO" id="GO:0017056">
    <property type="term" value="F:structural constituent of nuclear pore"/>
    <property type="evidence" value="ECO:0000314"/>
    <property type="project" value="GO_Central"/>
</dbReference>
<dbReference type="GO" id="GO:0051028">
    <property type="term" value="P:mRNA transport"/>
    <property type="evidence" value="ECO:0007669"/>
    <property type="project" value="UniProtKB-KW"/>
</dbReference>
<dbReference type="GO" id="GO:0006611">
    <property type="term" value="P:protein export from nucleus"/>
    <property type="evidence" value="ECO:0000314"/>
    <property type="project" value="BHF-UCL"/>
</dbReference>
<dbReference type="GO" id="GO:0006606">
    <property type="term" value="P:protein import into nucleus"/>
    <property type="evidence" value="ECO:0000314"/>
    <property type="project" value="UniProtKB"/>
</dbReference>
<dbReference type="GO" id="GO:0090204">
    <property type="term" value="P:protein localization to nuclear pore"/>
    <property type="evidence" value="ECO:0000250"/>
    <property type="project" value="UniProtKB"/>
</dbReference>
<dbReference type="CDD" id="cd00780">
    <property type="entry name" value="NTF2"/>
    <property type="match status" value="1"/>
</dbReference>
<dbReference type="FunFam" id="3.10.450.50:FF:000007">
    <property type="entry name" value="Nuclear transport factor 2"/>
    <property type="match status" value="1"/>
</dbReference>
<dbReference type="Gene3D" id="3.10.450.50">
    <property type="match status" value="1"/>
</dbReference>
<dbReference type="InterPro" id="IPR045875">
    <property type="entry name" value="NTF2"/>
</dbReference>
<dbReference type="InterPro" id="IPR032710">
    <property type="entry name" value="NTF2-like_dom_sf"/>
</dbReference>
<dbReference type="InterPro" id="IPR002075">
    <property type="entry name" value="NTF2_dom"/>
</dbReference>
<dbReference type="InterPro" id="IPR018222">
    <property type="entry name" value="Nuclear_transport_factor_2_euk"/>
</dbReference>
<dbReference type="PANTHER" id="PTHR12612">
    <property type="entry name" value="NUCLEAR TRANSPORT FACTOR 2"/>
    <property type="match status" value="1"/>
</dbReference>
<dbReference type="Pfam" id="PF02136">
    <property type="entry name" value="NTF2"/>
    <property type="match status" value="1"/>
</dbReference>
<dbReference type="SUPFAM" id="SSF54427">
    <property type="entry name" value="NTF2-like"/>
    <property type="match status" value="1"/>
</dbReference>
<dbReference type="PROSITE" id="PS50177">
    <property type="entry name" value="NTF2_DOMAIN"/>
    <property type="match status" value="1"/>
</dbReference>
<evidence type="ECO:0000250" key="1">
    <source>
        <dbReference type="UniProtKB" id="P61972"/>
    </source>
</evidence>
<evidence type="ECO:0000255" key="2">
    <source>
        <dbReference type="PROSITE-ProRule" id="PRU00137"/>
    </source>
</evidence>
<evidence type="ECO:0000269" key="3">
    <source>
    </source>
</evidence>
<evidence type="ECO:0000269" key="4">
    <source>
    </source>
</evidence>
<evidence type="ECO:0000269" key="5">
    <source>
    </source>
</evidence>
<evidence type="ECO:0000303" key="6">
    <source>
    </source>
</evidence>
<evidence type="ECO:0000303" key="7">
    <source>
    </source>
</evidence>
<evidence type="ECO:0000312" key="8">
    <source>
        <dbReference type="HGNC" id="HGNC:13722"/>
    </source>
</evidence>
<evidence type="ECO:0007744" key="9">
    <source>
    </source>
</evidence>
<evidence type="ECO:0007829" key="10">
    <source>
        <dbReference type="PDB" id="1GY5"/>
    </source>
</evidence>
<proteinExistence type="evidence at protein level"/>
<accession>P61970</accession>
<accession>B2R4G7</accession>
<accession>P13662</accession>
<accession>Q6IB67</accession>
<gene>
    <name evidence="8" type="primary">NUTF2</name>
    <name evidence="7" type="synonym">NTF2</name>
</gene>
<organism>
    <name type="scientific">Homo sapiens</name>
    <name type="common">Human</name>
    <dbReference type="NCBI Taxonomy" id="9606"/>
    <lineage>
        <taxon>Eukaryota</taxon>
        <taxon>Metazoa</taxon>
        <taxon>Chordata</taxon>
        <taxon>Craniata</taxon>
        <taxon>Vertebrata</taxon>
        <taxon>Euteleostomi</taxon>
        <taxon>Mammalia</taxon>
        <taxon>Eutheria</taxon>
        <taxon>Euarchontoglires</taxon>
        <taxon>Primates</taxon>
        <taxon>Haplorrhini</taxon>
        <taxon>Catarrhini</taxon>
        <taxon>Hominidae</taxon>
        <taxon>Homo</taxon>
    </lineage>
</organism>
<reference key="1">
    <citation type="journal article" date="1988" name="Nucleic Acids Res.">
        <title>Isolation of cDNA coding for the placental protein 15 (PP15).</title>
        <authorList>
            <person name="Grundmann U."/>
            <person name="Nerlich C."/>
            <person name="Rein T."/>
            <person name="Lottspeich F."/>
            <person name="Kuepper H.A."/>
        </authorList>
    </citation>
    <scope>NUCLEOTIDE SEQUENCE [MRNA]</scope>
</reference>
<reference key="2">
    <citation type="journal article" date="1995" name="J. Cell Biol.">
        <title>Identification of NTF2, a cytosolic factor for nuclear import that interacts with nuclear pore complex protein p62.</title>
        <authorList>
            <person name="Paschal B.M."/>
            <person name="Gerace L."/>
        </authorList>
    </citation>
    <scope>NUCLEOTIDE SEQUENCE [MRNA]</scope>
    <scope>PARTIAL PROTEIN SEQUENCE</scope>
    <scope>FUNCTION</scope>
    <scope>INTERACTION WITH NUP54; NUP58 AND NUP62</scope>
    <scope>SUBCELLULAR LOCATION</scope>
</reference>
<reference key="3">
    <citation type="submission" date="2004-06" db="EMBL/GenBank/DDBJ databases">
        <title>Cloning of human full open reading frames in Gateway(TM) system entry vector (pDONR201).</title>
        <authorList>
            <person name="Ebert L."/>
            <person name="Schick M."/>
            <person name="Neubert P."/>
            <person name="Schatten R."/>
            <person name="Henze S."/>
            <person name="Korn B."/>
        </authorList>
    </citation>
    <scope>NUCLEOTIDE SEQUENCE [LARGE SCALE MRNA]</scope>
</reference>
<reference key="4">
    <citation type="journal article" date="2004" name="Nat. Genet.">
        <title>Complete sequencing and characterization of 21,243 full-length human cDNAs.</title>
        <authorList>
            <person name="Ota T."/>
            <person name="Suzuki Y."/>
            <person name="Nishikawa T."/>
            <person name="Otsuki T."/>
            <person name="Sugiyama T."/>
            <person name="Irie R."/>
            <person name="Wakamatsu A."/>
            <person name="Hayashi K."/>
            <person name="Sato H."/>
            <person name="Nagai K."/>
            <person name="Kimura K."/>
            <person name="Makita H."/>
            <person name="Sekine M."/>
            <person name="Obayashi M."/>
            <person name="Nishi T."/>
            <person name="Shibahara T."/>
            <person name="Tanaka T."/>
            <person name="Ishii S."/>
            <person name="Yamamoto J."/>
            <person name="Saito K."/>
            <person name="Kawai Y."/>
            <person name="Isono Y."/>
            <person name="Nakamura Y."/>
            <person name="Nagahari K."/>
            <person name="Murakami K."/>
            <person name="Yasuda T."/>
            <person name="Iwayanagi T."/>
            <person name="Wagatsuma M."/>
            <person name="Shiratori A."/>
            <person name="Sudo H."/>
            <person name="Hosoiri T."/>
            <person name="Kaku Y."/>
            <person name="Kodaira H."/>
            <person name="Kondo H."/>
            <person name="Sugawara M."/>
            <person name="Takahashi M."/>
            <person name="Kanda K."/>
            <person name="Yokoi T."/>
            <person name="Furuya T."/>
            <person name="Kikkawa E."/>
            <person name="Omura Y."/>
            <person name="Abe K."/>
            <person name="Kamihara K."/>
            <person name="Katsuta N."/>
            <person name="Sato K."/>
            <person name="Tanikawa M."/>
            <person name="Yamazaki M."/>
            <person name="Ninomiya K."/>
            <person name="Ishibashi T."/>
            <person name="Yamashita H."/>
            <person name="Murakawa K."/>
            <person name="Fujimori K."/>
            <person name="Tanai H."/>
            <person name="Kimata M."/>
            <person name="Watanabe M."/>
            <person name="Hiraoka S."/>
            <person name="Chiba Y."/>
            <person name="Ishida S."/>
            <person name="Ono Y."/>
            <person name="Takiguchi S."/>
            <person name="Watanabe S."/>
            <person name="Yosida M."/>
            <person name="Hotuta T."/>
            <person name="Kusano J."/>
            <person name="Kanehori K."/>
            <person name="Takahashi-Fujii A."/>
            <person name="Hara H."/>
            <person name="Tanase T.-O."/>
            <person name="Nomura Y."/>
            <person name="Togiya S."/>
            <person name="Komai F."/>
            <person name="Hara R."/>
            <person name="Takeuchi K."/>
            <person name="Arita M."/>
            <person name="Imose N."/>
            <person name="Musashino K."/>
            <person name="Yuuki H."/>
            <person name="Oshima A."/>
            <person name="Sasaki N."/>
            <person name="Aotsuka S."/>
            <person name="Yoshikawa Y."/>
            <person name="Matsunawa H."/>
            <person name="Ichihara T."/>
            <person name="Shiohata N."/>
            <person name="Sano S."/>
            <person name="Moriya S."/>
            <person name="Momiyama H."/>
            <person name="Satoh N."/>
            <person name="Takami S."/>
            <person name="Terashima Y."/>
            <person name="Suzuki O."/>
            <person name="Nakagawa S."/>
            <person name="Senoh A."/>
            <person name="Mizoguchi H."/>
            <person name="Goto Y."/>
            <person name="Shimizu F."/>
            <person name="Wakebe H."/>
            <person name="Hishigaki H."/>
            <person name="Watanabe T."/>
            <person name="Sugiyama A."/>
            <person name="Takemoto M."/>
            <person name="Kawakami B."/>
            <person name="Yamazaki M."/>
            <person name="Watanabe K."/>
            <person name="Kumagai A."/>
            <person name="Itakura S."/>
            <person name="Fukuzumi Y."/>
            <person name="Fujimori Y."/>
            <person name="Komiyama M."/>
            <person name="Tashiro H."/>
            <person name="Tanigami A."/>
            <person name="Fujiwara T."/>
            <person name="Ono T."/>
            <person name="Yamada K."/>
            <person name="Fujii Y."/>
            <person name="Ozaki K."/>
            <person name="Hirao M."/>
            <person name="Ohmori Y."/>
            <person name="Kawabata A."/>
            <person name="Hikiji T."/>
            <person name="Kobatake N."/>
            <person name="Inagaki H."/>
            <person name="Ikema Y."/>
            <person name="Okamoto S."/>
            <person name="Okitani R."/>
            <person name="Kawakami T."/>
            <person name="Noguchi S."/>
            <person name="Itoh T."/>
            <person name="Shigeta K."/>
            <person name="Senba T."/>
            <person name="Matsumura K."/>
            <person name="Nakajima Y."/>
            <person name="Mizuno T."/>
            <person name="Morinaga M."/>
            <person name="Sasaki M."/>
            <person name="Togashi T."/>
            <person name="Oyama M."/>
            <person name="Hata H."/>
            <person name="Watanabe M."/>
            <person name="Komatsu T."/>
            <person name="Mizushima-Sugano J."/>
            <person name="Satoh T."/>
            <person name="Shirai Y."/>
            <person name="Takahashi Y."/>
            <person name="Nakagawa K."/>
            <person name="Okumura K."/>
            <person name="Nagase T."/>
            <person name="Nomura N."/>
            <person name="Kikuchi H."/>
            <person name="Masuho Y."/>
            <person name="Yamashita R."/>
            <person name="Nakai K."/>
            <person name="Yada T."/>
            <person name="Nakamura Y."/>
            <person name="Ohara O."/>
            <person name="Isogai T."/>
            <person name="Sugano S."/>
        </authorList>
    </citation>
    <scope>NUCLEOTIDE SEQUENCE [LARGE SCALE MRNA]</scope>
    <source>
        <tissue>Mammary gland</tissue>
    </source>
</reference>
<reference key="5">
    <citation type="submission" date="2005-07" db="EMBL/GenBank/DDBJ databases">
        <authorList>
            <person name="Mural R.J."/>
            <person name="Istrail S."/>
            <person name="Sutton G.G."/>
            <person name="Florea L."/>
            <person name="Halpern A.L."/>
            <person name="Mobarry C.M."/>
            <person name="Lippert R."/>
            <person name="Walenz B."/>
            <person name="Shatkay H."/>
            <person name="Dew I."/>
            <person name="Miller J.R."/>
            <person name="Flanigan M.J."/>
            <person name="Edwards N.J."/>
            <person name="Bolanos R."/>
            <person name="Fasulo D."/>
            <person name="Halldorsson B.V."/>
            <person name="Hannenhalli S."/>
            <person name="Turner R."/>
            <person name="Yooseph S."/>
            <person name="Lu F."/>
            <person name="Nusskern D.R."/>
            <person name="Shue B.C."/>
            <person name="Zheng X.H."/>
            <person name="Zhong F."/>
            <person name="Delcher A.L."/>
            <person name="Huson D.H."/>
            <person name="Kravitz S.A."/>
            <person name="Mouchard L."/>
            <person name="Reinert K."/>
            <person name="Remington K.A."/>
            <person name="Clark A.G."/>
            <person name="Waterman M.S."/>
            <person name="Eichler E.E."/>
            <person name="Adams M.D."/>
            <person name="Hunkapiller M.W."/>
            <person name="Myers E.W."/>
            <person name="Venter J.C."/>
        </authorList>
    </citation>
    <scope>NUCLEOTIDE SEQUENCE [LARGE SCALE GENOMIC DNA]</scope>
</reference>
<reference key="6">
    <citation type="journal article" date="2004" name="Genome Res.">
        <title>The status, quality, and expansion of the NIH full-length cDNA project: the Mammalian Gene Collection (MGC).</title>
        <authorList>
            <consortium name="The MGC Project Team"/>
        </authorList>
    </citation>
    <scope>NUCLEOTIDE SEQUENCE [LARGE SCALE MRNA]</scope>
    <source>
        <tissue>Lung</tissue>
    </source>
</reference>
<reference key="7">
    <citation type="journal article" date="2000" name="Mol. Biol. Cell">
        <title>Monoclonal antibodies to NTF2 inhibit nuclear protein import by preventing nuclear translocation of the GTPase Ran.</title>
        <authorList>
            <person name="Steggerda S.M."/>
            <person name="Black B.E."/>
            <person name="Paschal B.M."/>
        </authorList>
    </citation>
    <scope>FUNCTION</scope>
    <scope>INTERACTION WITH GDP-BOUND RAN</scope>
    <scope>SUBCELLULAR LOCATION</scope>
    <scope>MUTAGENESIS OF GLU-42 AND HIS-124</scope>
</reference>
<reference key="8">
    <citation type="journal article" date="2008" name="Traffic">
        <title>A new role for nuclear transport factor 2 and Ran: nuclear import of CapG.</title>
        <authorList>
            <person name="Van Impe K."/>
            <person name="Hubert T."/>
            <person name="De Corte V."/>
            <person name="Vanloo B."/>
            <person name="Boucherie C."/>
            <person name="Vandekerckhove J."/>
            <person name="Gettemans J."/>
        </authorList>
    </citation>
    <scope>INTERACTION WITH CAPG</scope>
</reference>
<reference key="9">
    <citation type="journal article" date="2009" name="Science">
        <title>Lysine acetylation targets protein complexes and co-regulates major cellular functions.</title>
        <authorList>
            <person name="Choudhary C."/>
            <person name="Kumar C."/>
            <person name="Gnad F."/>
            <person name="Nielsen M.L."/>
            <person name="Rehman M."/>
            <person name="Walther T.C."/>
            <person name="Olsen J.V."/>
            <person name="Mann M."/>
        </authorList>
    </citation>
    <scope>ACETYLATION [LARGE SCALE ANALYSIS] AT LYS-4</scope>
    <scope>IDENTIFICATION BY MASS SPECTROMETRY [LARGE SCALE ANALYSIS]</scope>
</reference>
<reference key="10">
    <citation type="journal article" date="2011" name="BMC Syst. Biol.">
        <title>Initial characterization of the human central proteome.</title>
        <authorList>
            <person name="Burkard T.R."/>
            <person name="Planyavsky M."/>
            <person name="Kaupe I."/>
            <person name="Breitwieser F.P."/>
            <person name="Buerckstuemmer T."/>
            <person name="Bennett K.L."/>
            <person name="Superti-Furga G."/>
            <person name="Colinge J."/>
        </authorList>
    </citation>
    <scope>IDENTIFICATION BY MASS SPECTROMETRY [LARGE SCALE ANALYSIS]</scope>
</reference>
<comment type="function">
    <text evidence="3 5">Mediates the import of GDP-bound RAN from the cytoplasm into the nucleus which is essential for the function of RAN in cargo receptor-mediated nucleocytoplasmic transport. Thereby, plays indirectly a more general role in cargo receptor-mediated nucleocytoplasmic transport. Interacts with GDP-bound RAN in the cytosol, recruits it to the nuclear pore complex via its interaction with nucleoporins and promotes its nuclear import.</text>
</comment>
<comment type="subunit">
    <text evidence="3 4 5">Homodimer (PubMed:7744965). Interacts with RAN (GDP-bound form); the interaction is direct and regulates RAN nuclear import (PubMed:10679025). Interacts with the nucleoporins NUP54, NUP58 and NUP62 (via FG repeats); recruits NUTF2 to the nuclear pore complex a step required for NUTF2-mediated GDP-bound RAN nuclear import (PubMed:7744965). Interacts with CAPG; mediates its nuclear import (PubMed:18266911).</text>
</comment>
<comment type="interaction">
    <interactant intactId="EBI-591778">
        <id>P61970</id>
    </interactant>
    <interactant intactId="EBI-10181188">
        <id>Q8N7W2-2</id>
        <label>BEND7</label>
    </interactant>
    <organismsDiffer>false</organismsDiffer>
    <experiments>3</experiments>
</comment>
<comment type="interaction">
    <interactant intactId="EBI-591778">
        <id>P61970</id>
    </interactant>
    <interactant intactId="EBI-10693038">
        <id>Q9NSI6-4</id>
        <label>BRWD1</label>
    </interactant>
    <organismsDiffer>false</organismsDiffer>
    <experiments>3</experiments>
</comment>
<comment type="interaction">
    <interactant intactId="EBI-591778">
        <id>P61970</id>
    </interactant>
    <interactant intactId="EBI-12020154">
        <id>Q13555-5</id>
        <label>CAMK2G</label>
    </interactant>
    <organismsDiffer>false</organismsDiffer>
    <experiments>3</experiments>
</comment>
<comment type="interaction">
    <interactant intactId="EBI-591778">
        <id>P61970</id>
    </interactant>
    <interactant intactId="EBI-711501">
        <id>Q9BWC9</id>
        <label>CCDC106</label>
    </interactant>
    <organismsDiffer>false</organismsDiffer>
    <experiments>3</experiments>
</comment>
<comment type="interaction">
    <interactant intactId="EBI-591778">
        <id>P61970</id>
    </interactant>
    <interactant intactId="EBI-12235840">
        <id>Q8NCX0-3</id>
        <label>CCDC150</label>
    </interactant>
    <organismsDiffer>false</organismsDiffer>
    <experiments>3</experiments>
</comment>
<comment type="interaction">
    <interactant intactId="EBI-591778">
        <id>P61970</id>
    </interactant>
    <interactant intactId="EBI-743375">
        <id>Q9NX63</id>
        <label>CHCHD3</label>
    </interactant>
    <organismsDiffer>false</organismsDiffer>
    <experiments>3</experiments>
</comment>
<comment type="interaction">
    <interactant intactId="EBI-591778">
        <id>P61970</id>
    </interactant>
    <interactant intactId="EBI-12178895">
        <id>Q9BY43-2</id>
        <label>CHMP4A</label>
    </interactant>
    <organismsDiffer>false</organismsDiffer>
    <experiments>3</experiments>
</comment>
<comment type="interaction">
    <interactant intactId="EBI-591778">
        <id>P61970</id>
    </interactant>
    <interactant intactId="EBI-1050662">
        <id>P12532</id>
        <label>CKMT1B</label>
    </interactant>
    <organismsDiffer>false</organismsDiffer>
    <experiments>3</experiments>
</comment>
<comment type="interaction">
    <interactant intactId="EBI-591778">
        <id>P61970</id>
    </interactant>
    <interactant intactId="EBI-1056029">
        <id>Q16740</id>
        <label>CLPP</label>
    </interactant>
    <organismsDiffer>false</organismsDiffer>
    <experiments>3</experiments>
</comment>
<comment type="interaction">
    <interactant intactId="EBI-591778">
        <id>P61970</id>
    </interactant>
    <interactant intactId="EBI-742802">
        <id>Q9Y247</id>
        <label>FAM50B</label>
    </interactant>
    <organismsDiffer>false</organismsDiffer>
    <experiments>3</experiments>
</comment>
<comment type="interaction">
    <interactant intactId="EBI-591778">
        <id>P61970</id>
    </interactant>
    <interactant intactId="EBI-740641">
        <id>Q9NP66</id>
        <label>HMG20A</label>
    </interactant>
    <organismsDiffer>false</organismsDiffer>
    <experiments>3</experiments>
</comment>
<comment type="interaction">
    <interactant intactId="EBI-591778">
        <id>P61970</id>
    </interactant>
    <interactant intactId="EBI-713401">
        <id>Q9P0W2</id>
        <label>HMG20B</label>
    </interactant>
    <organismsDiffer>false</organismsDiffer>
    <experiments>3</experiments>
</comment>
<comment type="interaction">
    <interactant intactId="EBI-591778">
        <id>P61970</id>
    </interactant>
    <interactant intactId="EBI-9089060">
        <id>Q7Z7F0-4</id>
        <label>KHDC4</label>
    </interactant>
    <organismsDiffer>false</organismsDiffer>
    <experiments>3</experiments>
</comment>
<comment type="interaction">
    <interactant intactId="EBI-591778">
        <id>P61970</id>
    </interactant>
    <interactant intactId="EBI-9996498">
        <id>O43790</id>
        <label>KRT86</label>
    </interactant>
    <organismsDiffer>false</organismsDiffer>
    <experiments>3</experiments>
</comment>
<comment type="interaction">
    <interactant intactId="EBI-591778">
        <id>P61970</id>
    </interactant>
    <interactant intactId="EBI-11958364">
        <id>Q9BYQ0</id>
        <label>KRTAP9-8</label>
    </interactant>
    <organismsDiffer>false</organismsDiffer>
    <experiments>3</experiments>
</comment>
<comment type="interaction">
    <interactant intactId="EBI-591778">
        <id>P61970</id>
    </interactant>
    <interactant intactId="EBI-9088686">
        <id>Q14847-2</id>
        <label>LASP1</label>
    </interactant>
    <organismsDiffer>false</organismsDiffer>
    <experiments>3</experiments>
</comment>
<comment type="interaction">
    <interactant intactId="EBI-591778">
        <id>P61970</id>
    </interactant>
    <interactant intactId="EBI-12224199">
        <id>Q5T751</id>
        <label>LCE1C</label>
    </interactant>
    <organismsDiffer>false</organismsDiffer>
    <experiments>3</experiments>
</comment>
<comment type="interaction">
    <interactant intactId="EBI-591778">
        <id>P61970</id>
    </interactant>
    <interactant intactId="EBI-11955689">
        <id>Q5TCM9</id>
        <label>LCE5A</label>
    </interactant>
    <organismsDiffer>false</organismsDiffer>
    <experiments>3</experiments>
</comment>
<comment type="interaction">
    <interactant intactId="EBI-591778">
        <id>P61970</id>
    </interactant>
    <interactant intactId="EBI-726510">
        <id>Q96BZ8</id>
        <label>LENG1</label>
    </interactant>
    <organismsDiffer>false</organismsDiffer>
    <experiments>3</experiments>
</comment>
<comment type="interaction">
    <interactant intactId="EBI-591778">
        <id>P61970</id>
    </interactant>
    <interactant intactId="EBI-2857471">
        <id>Q6NTE8</id>
        <label>MRNIP</label>
    </interactant>
    <organismsDiffer>false</organismsDiffer>
    <experiments>3</experiments>
</comment>
<comment type="interaction">
    <interactant intactId="EBI-591778">
        <id>P61970</id>
    </interactant>
    <interactant intactId="EBI-5662487">
        <id>Q8TDC0</id>
        <label>MYOZ3</label>
    </interactant>
    <organismsDiffer>false</organismsDiffer>
    <experiments>3</experiments>
</comment>
<comment type="interaction">
    <interactant intactId="EBI-591778">
        <id>P61970</id>
    </interactant>
    <interactant intactId="EBI-741141">
        <id>P15531</id>
        <label>NME1</label>
    </interactant>
    <organismsDiffer>false</organismsDiffer>
    <experiments>3</experiments>
</comment>
<comment type="interaction">
    <interactant intactId="EBI-591778">
        <id>P61970</id>
    </interactant>
    <interactant intactId="EBI-744871">
        <id>O00746</id>
        <label>NME4</label>
    </interactant>
    <organismsDiffer>false</organismsDiffer>
    <experiments>3</experiments>
</comment>
<comment type="interaction">
    <interactant intactId="EBI-591778">
        <id>P61970</id>
    </interactant>
    <interactant intactId="EBI-10311735">
        <id>Q9NQ35</id>
        <label>NRIP3</label>
    </interactant>
    <organismsDiffer>false</organismsDiffer>
    <experiments>3</experiments>
</comment>
<comment type="interaction">
    <interactant intactId="EBI-591778">
        <id>P61970</id>
    </interactant>
    <interactant intactId="EBI-741048">
        <id>Q7Z3B4</id>
        <label>NUP54</label>
    </interactant>
    <organismsDiffer>false</organismsDiffer>
    <experiments>3</experiments>
</comment>
<comment type="interaction">
    <interactant intactId="EBI-591778">
        <id>P61970</id>
    </interactant>
    <interactant intactId="EBI-347978">
        <id>P37198</id>
        <label>NUP62</label>
    </interactant>
    <organismsDiffer>false</organismsDiffer>
    <experiments>7</experiments>
</comment>
<comment type="interaction">
    <interactant intactId="EBI-591778">
        <id>P61970</id>
    </interactant>
    <interactant intactId="EBI-591778">
        <id>P61970</id>
        <label>NUTF2</label>
    </interactant>
    <organismsDiffer>false</organismsDiffer>
    <experiments>3</experiments>
</comment>
<comment type="interaction">
    <interactant intactId="EBI-591778">
        <id>P61970</id>
    </interactant>
    <interactant intactId="EBI-10240813">
        <id>Q3KNR5</id>
        <label>PAX4</label>
    </interactant>
    <organismsDiffer>false</organismsDiffer>
    <experiments>3</experiments>
</comment>
<comment type="interaction">
    <interactant intactId="EBI-591778">
        <id>P61970</id>
    </interactant>
    <interactant intactId="EBI-10302990">
        <id>Q9BYU1</id>
        <label>PBX4</label>
    </interactant>
    <organismsDiffer>false</organismsDiffer>
    <experiments>3</experiments>
</comment>
<comment type="interaction">
    <interactant intactId="EBI-591778">
        <id>P61970</id>
    </interactant>
    <interactant intactId="EBI-358311">
        <id>P12004</id>
        <label>PCNA</label>
    </interactant>
    <organismsDiffer>false</organismsDiffer>
    <experiments>3</experiments>
</comment>
<comment type="interaction">
    <interactant intactId="EBI-591778">
        <id>P61970</id>
    </interactant>
    <interactant intactId="EBI-359022">
        <id>Q01813</id>
        <label>PFKP</label>
    </interactant>
    <organismsDiffer>false</organismsDiffer>
    <experiments>3</experiments>
</comment>
<comment type="interaction">
    <interactant intactId="EBI-591778">
        <id>P61970</id>
    </interactant>
    <interactant intactId="EBI-2861403">
        <id>Q9UIL8</id>
        <label>PHF11</label>
    </interactant>
    <organismsDiffer>false</organismsDiffer>
    <experiments>3</experiments>
</comment>
<comment type="interaction">
    <interactant intactId="EBI-591778">
        <id>P61970</id>
    </interactant>
    <interactant intactId="EBI-710402">
        <id>Q96I34</id>
        <label>PPP1R16A</label>
    </interactant>
    <organismsDiffer>false</organismsDiffer>
    <experiments>3</experiments>
</comment>
<comment type="interaction">
    <interactant intactId="EBI-591778">
        <id>P61970</id>
    </interactant>
    <interactant intactId="EBI-286642">
        <id>P62826</id>
        <label>RAN</label>
    </interactant>
    <organismsDiffer>false</organismsDiffer>
    <experiments>9</experiments>
</comment>
<comment type="interaction">
    <interactant intactId="EBI-591778">
        <id>P61970</id>
    </interactant>
    <interactant intactId="EBI-747925">
        <id>Q9NQG5</id>
        <label>RPRD1B</label>
    </interactant>
    <organismsDiffer>false</organismsDiffer>
    <experiments>3</experiments>
</comment>
<comment type="interaction">
    <interactant intactId="EBI-591778">
        <id>P61970</id>
    </interactant>
    <interactant intactId="EBI-11995806">
        <id>Q9H0A9-2</id>
        <label>SPATC1L</label>
    </interactant>
    <organismsDiffer>false</organismsDiffer>
    <experiments>3</experiments>
</comment>
<comment type="interaction">
    <interactant intactId="EBI-591778">
        <id>P61970</id>
    </interactant>
    <interactant intactId="EBI-354861">
        <id>Q9C004</id>
        <label>SPRY4</label>
    </interactant>
    <organismsDiffer>false</organismsDiffer>
    <experiments>3</experiments>
</comment>
<comment type="interaction">
    <interactant intactId="EBI-591778">
        <id>P61970</id>
    </interactant>
    <interactant intactId="EBI-12833746">
        <id>Q5T0J7-2</id>
        <label>TEX35</label>
    </interactant>
    <organismsDiffer>false</organismsDiffer>
    <experiments>3</experiments>
</comment>
<comment type="interaction">
    <interactant intactId="EBI-591778">
        <id>P61970</id>
    </interactant>
    <interactant intactId="EBI-17438286">
        <id>Q8WTV1</id>
        <label>THAP3</label>
    </interactant>
    <organismsDiffer>false</organismsDiffer>
    <experiments>3</experiments>
</comment>
<comment type="interaction">
    <interactant intactId="EBI-591778">
        <id>P61970</id>
    </interactant>
    <interactant intactId="EBI-11741437">
        <id>Q08117-2</id>
        <label>TLE5</label>
    </interactant>
    <organismsDiffer>false</organismsDiffer>
    <experiments>3</experiments>
</comment>
<comment type="interaction">
    <interactant intactId="EBI-591778">
        <id>P61970</id>
    </interactant>
    <interactant intactId="EBI-2514383">
        <id>Q5T6F2</id>
        <label>UBAP2</label>
    </interactant>
    <organismsDiffer>false</organismsDiffer>
    <experiments>3</experiments>
</comment>
<comment type="interaction">
    <interactant intactId="EBI-591778">
        <id>P61970</id>
    </interactant>
    <interactant intactId="EBI-12111538">
        <id>Q8IY57-5</id>
        <label>YAF2</label>
    </interactant>
    <organismsDiffer>false</organismsDiffer>
    <experiments>3</experiments>
</comment>
<comment type="interaction">
    <interactant intactId="EBI-591778">
        <id>P61970</id>
    </interactant>
    <interactant intactId="EBI-2682299">
        <id>Q96NC0</id>
        <label>ZMAT2</label>
    </interactant>
    <organismsDiffer>false</organismsDiffer>
    <experiments>3</experiments>
</comment>
<comment type="subcellular location">
    <subcellularLocation>
        <location evidence="3 5">Cytoplasm</location>
        <location evidence="3 5">Cytosol</location>
    </subcellularLocation>
    <subcellularLocation>
        <location evidence="1">Nucleus outer membrane</location>
    </subcellularLocation>
    <subcellularLocation>
        <location evidence="1">Nucleus</location>
        <location evidence="1">Nuclear pore complex</location>
    </subcellularLocation>
    <subcellularLocation>
        <location evidence="1">Nucleus inner membrane</location>
    </subcellularLocation>
    <subcellularLocation>
        <location evidence="3">Nucleus</location>
        <location evidence="3">Nucleoplasm</location>
    </subcellularLocation>
    <text evidence="3">At steady state it is essentially nucleoplasmic, enriched in nucleoplasmic foci.</text>
</comment>
<sequence>MGDKPIWEQIGSSFIQHYYQLFDNDRTQLGAIYIDASCLTWEGQQFQGKAAIVEKLSSLPFQKIQHSITAQDHQPTPDSCIISMVVGQLKADEDPIMGFHQMFLLKNINDAWVCTNDMFRLALHNFG</sequence>